<gene>
    <name evidence="1" type="primary">rpmD</name>
    <name type="ordered locus">GTNG_0123</name>
</gene>
<name>RL30_GEOTN</name>
<dbReference type="EMBL" id="CP000557">
    <property type="protein sequence ID" value="ABO65510.1"/>
    <property type="molecule type" value="Genomic_DNA"/>
</dbReference>
<dbReference type="RefSeq" id="WP_008881927.1">
    <property type="nucleotide sequence ID" value="NC_009328.1"/>
</dbReference>
<dbReference type="SMR" id="A4IJK6"/>
<dbReference type="GeneID" id="87622308"/>
<dbReference type="KEGG" id="gtn:GTNG_0123"/>
<dbReference type="eggNOG" id="COG1841">
    <property type="taxonomic scope" value="Bacteria"/>
</dbReference>
<dbReference type="HOGENOM" id="CLU_131047_2_1_9"/>
<dbReference type="Proteomes" id="UP000001578">
    <property type="component" value="Chromosome"/>
</dbReference>
<dbReference type="GO" id="GO:0022625">
    <property type="term" value="C:cytosolic large ribosomal subunit"/>
    <property type="evidence" value="ECO:0007669"/>
    <property type="project" value="TreeGrafter"/>
</dbReference>
<dbReference type="GO" id="GO:0003735">
    <property type="term" value="F:structural constituent of ribosome"/>
    <property type="evidence" value="ECO:0007669"/>
    <property type="project" value="InterPro"/>
</dbReference>
<dbReference type="GO" id="GO:0006412">
    <property type="term" value="P:translation"/>
    <property type="evidence" value="ECO:0007669"/>
    <property type="project" value="UniProtKB-UniRule"/>
</dbReference>
<dbReference type="CDD" id="cd01658">
    <property type="entry name" value="Ribosomal_L30"/>
    <property type="match status" value="1"/>
</dbReference>
<dbReference type="FunFam" id="3.30.1390.20:FF:000001">
    <property type="entry name" value="50S ribosomal protein L30"/>
    <property type="match status" value="1"/>
</dbReference>
<dbReference type="Gene3D" id="3.30.1390.20">
    <property type="entry name" value="Ribosomal protein L30, ferredoxin-like fold domain"/>
    <property type="match status" value="1"/>
</dbReference>
<dbReference type="HAMAP" id="MF_01371_B">
    <property type="entry name" value="Ribosomal_uL30_B"/>
    <property type="match status" value="1"/>
</dbReference>
<dbReference type="InterPro" id="IPR036919">
    <property type="entry name" value="Ribo_uL30_ferredoxin-like_sf"/>
</dbReference>
<dbReference type="InterPro" id="IPR005996">
    <property type="entry name" value="Ribosomal_uL30_bac-type"/>
</dbReference>
<dbReference type="InterPro" id="IPR018038">
    <property type="entry name" value="Ribosomal_uL30_CS"/>
</dbReference>
<dbReference type="InterPro" id="IPR016082">
    <property type="entry name" value="Ribosomal_uL30_ferredoxin-like"/>
</dbReference>
<dbReference type="NCBIfam" id="TIGR01308">
    <property type="entry name" value="rpmD_bact"/>
    <property type="match status" value="1"/>
</dbReference>
<dbReference type="PANTHER" id="PTHR15892:SF2">
    <property type="entry name" value="LARGE RIBOSOMAL SUBUNIT PROTEIN UL30M"/>
    <property type="match status" value="1"/>
</dbReference>
<dbReference type="PANTHER" id="PTHR15892">
    <property type="entry name" value="MITOCHONDRIAL RIBOSOMAL PROTEIN L30"/>
    <property type="match status" value="1"/>
</dbReference>
<dbReference type="Pfam" id="PF00327">
    <property type="entry name" value="Ribosomal_L30"/>
    <property type="match status" value="1"/>
</dbReference>
<dbReference type="PIRSF" id="PIRSF002211">
    <property type="entry name" value="Ribosomal_L30_bac-type"/>
    <property type="match status" value="1"/>
</dbReference>
<dbReference type="SUPFAM" id="SSF55129">
    <property type="entry name" value="Ribosomal protein L30p/L7e"/>
    <property type="match status" value="1"/>
</dbReference>
<dbReference type="PROSITE" id="PS00634">
    <property type="entry name" value="RIBOSOMAL_L30"/>
    <property type="match status" value="1"/>
</dbReference>
<protein>
    <recommendedName>
        <fullName evidence="1">Large ribosomal subunit protein uL30</fullName>
    </recommendedName>
    <alternativeName>
        <fullName evidence="2">50S ribosomal protein L30</fullName>
    </alternativeName>
</protein>
<keyword id="KW-0687">Ribonucleoprotein</keyword>
<keyword id="KW-0689">Ribosomal protein</keyword>
<evidence type="ECO:0000255" key="1">
    <source>
        <dbReference type="HAMAP-Rule" id="MF_01371"/>
    </source>
</evidence>
<evidence type="ECO:0000305" key="2"/>
<reference key="1">
    <citation type="journal article" date="2007" name="Proc. Natl. Acad. Sci. U.S.A.">
        <title>Genome and proteome of long-chain alkane degrading Geobacillus thermodenitrificans NG80-2 isolated from a deep-subsurface oil reservoir.</title>
        <authorList>
            <person name="Feng L."/>
            <person name="Wang W."/>
            <person name="Cheng J."/>
            <person name="Ren Y."/>
            <person name="Zhao G."/>
            <person name="Gao C."/>
            <person name="Tang Y."/>
            <person name="Liu X."/>
            <person name="Han W."/>
            <person name="Peng X."/>
            <person name="Liu R."/>
            <person name="Wang L."/>
        </authorList>
    </citation>
    <scope>NUCLEOTIDE SEQUENCE [LARGE SCALE GENOMIC DNA]</scope>
    <source>
        <strain>NG80-2</strain>
    </source>
</reference>
<proteinExistence type="inferred from homology"/>
<comment type="subunit">
    <text evidence="1">Part of the 50S ribosomal subunit.</text>
</comment>
<comment type="similarity">
    <text evidence="1">Belongs to the universal ribosomal protein uL30 family.</text>
</comment>
<organism>
    <name type="scientific">Geobacillus thermodenitrificans (strain NG80-2)</name>
    <dbReference type="NCBI Taxonomy" id="420246"/>
    <lineage>
        <taxon>Bacteria</taxon>
        <taxon>Bacillati</taxon>
        <taxon>Bacillota</taxon>
        <taxon>Bacilli</taxon>
        <taxon>Bacillales</taxon>
        <taxon>Anoxybacillaceae</taxon>
        <taxon>Geobacillus</taxon>
    </lineage>
</organism>
<feature type="chain" id="PRO_1000056046" description="Large ribosomal subunit protein uL30">
    <location>
        <begin position="1"/>
        <end position="62"/>
    </location>
</feature>
<accession>A4IJK6</accession>
<sequence>MAKKLAITLTRSVIGRPEDQRITVKTLGLRKMHQTVVHNDNPAIRGMINKVAHLVTVKEIEE</sequence>